<accession>Q0ANS4</accession>
<gene>
    <name evidence="1" type="primary">rpoA</name>
    <name type="ordered locus">Mmar10_1771</name>
</gene>
<sequence length="339" mass="37770">MIEKNWQELIRPMKPEIEPGHDPARQAKIVAEPLERGFGMTLGNALRRVLLSSLQGAAVTNVHIDGVVHEFSSIDGVREDVTDIVLNIKQIALRMHGEGPKRVVLKKSGPGIVTAGDIEETADVEIVNKDLALCTLDEGAEIRMEFTINTGKGYVPSERNRPEDAPIGLIGVDALYSPVKRVSYKVENTREGQVLDYDKLTLEVETDGTVTPEDSVAFAARILQDQFQIFINFEEAVEARPAEDDKPELDFNPALLRKVDELELSVRSANCLKNDNIVYIGDLIQKSEAEMLRTPNFGRKSLNEIKEVLAQMGLHLGMEAPNWPPENIEDLAKRFEDHV</sequence>
<keyword id="KW-0240">DNA-directed RNA polymerase</keyword>
<keyword id="KW-0548">Nucleotidyltransferase</keyword>
<keyword id="KW-1185">Reference proteome</keyword>
<keyword id="KW-0804">Transcription</keyword>
<keyword id="KW-0808">Transferase</keyword>
<reference key="1">
    <citation type="submission" date="2006-08" db="EMBL/GenBank/DDBJ databases">
        <title>Complete sequence of Maricaulis maris MCS10.</title>
        <authorList>
            <consortium name="US DOE Joint Genome Institute"/>
            <person name="Copeland A."/>
            <person name="Lucas S."/>
            <person name="Lapidus A."/>
            <person name="Barry K."/>
            <person name="Detter J.C."/>
            <person name="Glavina del Rio T."/>
            <person name="Hammon N."/>
            <person name="Israni S."/>
            <person name="Dalin E."/>
            <person name="Tice H."/>
            <person name="Pitluck S."/>
            <person name="Saunders E."/>
            <person name="Brettin T."/>
            <person name="Bruce D."/>
            <person name="Han C."/>
            <person name="Tapia R."/>
            <person name="Gilna P."/>
            <person name="Schmutz J."/>
            <person name="Larimer F."/>
            <person name="Land M."/>
            <person name="Hauser L."/>
            <person name="Kyrpides N."/>
            <person name="Mikhailova N."/>
            <person name="Viollier P."/>
            <person name="Stephens C."/>
            <person name="Richardson P."/>
        </authorList>
    </citation>
    <scope>NUCLEOTIDE SEQUENCE [LARGE SCALE GENOMIC DNA]</scope>
    <source>
        <strain>MCS10</strain>
    </source>
</reference>
<feature type="chain" id="PRO_0000264513" description="DNA-directed RNA polymerase subunit alpha">
    <location>
        <begin position="1"/>
        <end position="339"/>
    </location>
</feature>
<feature type="region of interest" description="Alpha N-terminal domain (alpha-NTD)" evidence="1">
    <location>
        <begin position="1"/>
        <end position="234"/>
    </location>
</feature>
<feature type="region of interest" description="Alpha C-terminal domain (alpha-CTD)" evidence="1">
    <location>
        <begin position="251"/>
        <end position="339"/>
    </location>
</feature>
<proteinExistence type="inferred from homology"/>
<protein>
    <recommendedName>
        <fullName evidence="1">DNA-directed RNA polymerase subunit alpha</fullName>
        <shortName evidence="1">RNAP subunit alpha</shortName>
        <ecNumber evidence="1">2.7.7.6</ecNumber>
    </recommendedName>
    <alternativeName>
        <fullName evidence="1">RNA polymerase subunit alpha</fullName>
    </alternativeName>
    <alternativeName>
        <fullName evidence="1">Transcriptase subunit alpha</fullName>
    </alternativeName>
</protein>
<dbReference type="EC" id="2.7.7.6" evidence="1"/>
<dbReference type="EMBL" id="CP000449">
    <property type="protein sequence ID" value="ABI66063.1"/>
    <property type="molecule type" value="Genomic_DNA"/>
</dbReference>
<dbReference type="RefSeq" id="WP_011643709.1">
    <property type="nucleotide sequence ID" value="NC_008347.1"/>
</dbReference>
<dbReference type="SMR" id="Q0ANS4"/>
<dbReference type="STRING" id="394221.Mmar10_1771"/>
<dbReference type="KEGG" id="mmr:Mmar10_1771"/>
<dbReference type="eggNOG" id="COG0202">
    <property type="taxonomic scope" value="Bacteria"/>
</dbReference>
<dbReference type="HOGENOM" id="CLU_053084_0_0_5"/>
<dbReference type="OrthoDB" id="9805706at2"/>
<dbReference type="Proteomes" id="UP000001964">
    <property type="component" value="Chromosome"/>
</dbReference>
<dbReference type="GO" id="GO:0005737">
    <property type="term" value="C:cytoplasm"/>
    <property type="evidence" value="ECO:0007669"/>
    <property type="project" value="UniProtKB-ARBA"/>
</dbReference>
<dbReference type="GO" id="GO:0000428">
    <property type="term" value="C:DNA-directed RNA polymerase complex"/>
    <property type="evidence" value="ECO:0007669"/>
    <property type="project" value="UniProtKB-KW"/>
</dbReference>
<dbReference type="GO" id="GO:0003677">
    <property type="term" value="F:DNA binding"/>
    <property type="evidence" value="ECO:0007669"/>
    <property type="project" value="UniProtKB-UniRule"/>
</dbReference>
<dbReference type="GO" id="GO:0003899">
    <property type="term" value="F:DNA-directed RNA polymerase activity"/>
    <property type="evidence" value="ECO:0007669"/>
    <property type="project" value="UniProtKB-UniRule"/>
</dbReference>
<dbReference type="GO" id="GO:0046983">
    <property type="term" value="F:protein dimerization activity"/>
    <property type="evidence" value="ECO:0007669"/>
    <property type="project" value="InterPro"/>
</dbReference>
<dbReference type="GO" id="GO:0006351">
    <property type="term" value="P:DNA-templated transcription"/>
    <property type="evidence" value="ECO:0007669"/>
    <property type="project" value="UniProtKB-UniRule"/>
</dbReference>
<dbReference type="CDD" id="cd06928">
    <property type="entry name" value="RNAP_alpha_NTD"/>
    <property type="match status" value="1"/>
</dbReference>
<dbReference type="FunFam" id="1.10.150.20:FF:000001">
    <property type="entry name" value="DNA-directed RNA polymerase subunit alpha"/>
    <property type="match status" value="1"/>
</dbReference>
<dbReference type="FunFam" id="2.170.120.12:FF:000001">
    <property type="entry name" value="DNA-directed RNA polymerase subunit alpha"/>
    <property type="match status" value="1"/>
</dbReference>
<dbReference type="Gene3D" id="1.10.150.20">
    <property type="entry name" value="5' to 3' exonuclease, C-terminal subdomain"/>
    <property type="match status" value="1"/>
</dbReference>
<dbReference type="Gene3D" id="2.170.120.12">
    <property type="entry name" value="DNA-directed RNA polymerase, insert domain"/>
    <property type="match status" value="1"/>
</dbReference>
<dbReference type="Gene3D" id="3.30.1360.10">
    <property type="entry name" value="RNA polymerase, RBP11-like subunit"/>
    <property type="match status" value="1"/>
</dbReference>
<dbReference type="HAMAP" id="MF_00059">
    <property type="entry name" value="RNApol_bact_RpoA"/>
    <property type="match status" value="1"/>
</dbReference>
<dbReference type="InterPro" id="IPR011262">
    <property type="entry name" value="DNA-dir_RNA_pol_insert"/>
</dbReference>
<dbReference type="InterPro" id="IPR011263">
    <property type="entry name" value="DNA-dir_RNA_pol_RpoA/D/Rpb3"/>
</dbReference>
<dbReference type="InterPro" id="IPR011773">
    <property type="entry name" value="DNA-dir_RpoA"/>
</dbReference>
<dbReference type="InterPro" id="IPR036603">
    <property type="entry name" value="RBP11-like"/>
</dbReference>
<dbReference type="InterPro" id="IPR011260">
    <property type="entry name" value="RNAP_asu_C"/>
</dbReference>
<dbReference type="InterPro" id="IPR036643">
    <property type="entry name" value="RNApol_insert_sf"/>
</dbReference>
<dbReference type="NCBIfam" id="NF003513">
    <property type="entry name" value="PRK05182.1-2"/>
    <property type="match status" value="1"/>
</dbReference>
<dbReference type="NCBIfam" id="NF003519">
    <property type="entry name" value="PRK05182.2-5"/>
    <property type="match status" value="1"/>
</dbReference>
<dbReference type="NCBIfam" id="TIGR02027">
    <property type="entry name" value="rpoA"/>
    <property type="match status" value="1"/>
</dbReference>
<dbReference type="Pfam" id="PF01000">
    <property type="entry name" value="RNA_pol_A_bac"/>
    <property type="match status" value="1"/>
</dbReference>
<dbReference type="Pfam" id="PF03118">
    <property type="entry name" value="RNA_pol_A_CTD"/>
    <property type="match status" value="1"/>
</dbReference>
<dbReference type="Pfam" id="PF01193">
    <property type="entry name" value="RNA_pol_L"/>
    <property type="match status" value="1"/>
</dbReference>
<dbReference type="SMART" id="SM00662">
    <property type="entry name" value="RPOLD"/>
    <property type="match status" value="1"/>
</dbReference>
<dbReference type="SUPFAM" id="SSF47789">
    <property type="entry name" value="C-terminal domain of RNA polymerase alpha subunit"/>
    <property type="match status" value="1"/>
</dbReference>
<dbReference type="SUPFAM" id="SSF56553">
    <property type="entry name" value="Insert subdomain of RNA polymerase alpha subunit"/>
    <property type="match status" value="1"/>
</dbReference>
<dbReference type="SUPFAM" id="SSF55257">
    <property type="entry name" value="RBP11-like subunits of RNA polymerase"/>
    <property type="match status" value="1"/>
</dbReference>
<name>RPOA_MARMM</name>
<comment type="function">
    <text evidence="1">DNA-dependent RNA polymerase catalyzes the transcription of DNA into RNA using the four ribonucleoside triphosphates as substrates.</text>
</comment>
<comment type="catalytic activity">
    <reaction evidence="1">
        <text>RNA(n) + a ribonucleoside 5'-triphosphate = RNA(n+1) + diphosphate</text>
        <dbReference type="Rhea" id="RHEA:21248"/>
        <dbReference type="Rhea" id="RHEA-COMP:14527"/>
        <dbReference type="Rhea" id="RHEA-COMP:17342"/>
        <dbReference type="ChEBI" id="CHEBI:33019"/>
        <dbReference type="ChEBI" id="CHEBI:61557"/>
        <dbReference type="ChEBI" id="CHEBI:140395"/>
        <dbReference type="EC" id="2.7.7.6"/>
    </reaction>
</comment>
<comment type="subunit">
    <text evidence="1">Homodimer. The RNAP catalytic core consists of 2 alpha, 1 beta, 1 beta' and 1 omega subunit. When a sigma factor is associated with the core the holoenzyme is formed, which can initiate transcription.</text>
</comment>
<comment type="domain">
    <text evidence="1">The N-terminal domain is essential for RNAP assembly and basal transcription, whereas the C-terminal domain is involved in interaction with transcriptional regulators and with upstream promoter elements.</text>
</comment>
<comment type="similarity">
    <text evidence="1">Belongs to the RNA polymerase alpha chain family.</text>
</comment>
<organism>
    <name type="scientific">Maricaulis maris (strain MCS10)</name>
    <name type="common">Caulobacter maris</name>
    <dbReference type="NCBI Taxonomy" id="394221"/>
    <lineage>
        <taxon>Bacteria</taxon>
        <taxon>Pseudomonadati</taxon>
        <taxon>Pseudomonadota</taxon>
        <taxon>Alphaproteobacteria</taxon>
        <taxon>Maricaulales</taxon>
        <taxon>Maricaulaceae</taxon>
        <taxon>Maricaulis</taxon>
    </lineage>
</organism>
<evidence type="ECO:0000255" key="1">
    <source>
        <dbReference type="HAMAP-Rule" id="MF_00059"/>
    </source>
</evidence>